<sequence>MKLQILLLALVLIAVEANAVKQGINATIPALIVFGDSIMDTGNNNNLPTLLKCNFPPYGKDYPGGDATGRFSDGRVPSDLIAEKLGLAKTLPAYMNSYLKPEDLLKGVTFASRGTGYDPLTAKIMSVISVWDQLIYFKEYISKIKRHFGEEKAKDILEHSFFLVVSSSNDLAHTYLAQAHRYDRTSYANFLADSAVHFVRELHKLGARKIGVFSAVPVGCVPLQRTVFGGFFTRGCNEPLNNMAKQFNARLSPALDSLDKELDGVILYINVYDTLFDMIQHPKKYGFDVADKGCCGKGLLTISYLCNSLNPFTCSNSSSYIFWDSYHPSERAYQVIVDNLLDKYLSKVY</sequence>
<reference key="1">
    <citation type="journal article" date="2000" name="Nature">
        <title>Sequence and analysis of chromosome 1 of the plant Arabidopsis thaliana.</title>
        <authorList>
            <person name="Theologis A."/>
            <person name="Ecker J.R."/>
            <person name="Palm C.J."/>
            <person name="Federspiel N.A."/>
            <person name="Kaul S."/>
            <person name="White O."/>
            <person name="Alonso J."/>
            <person name="Altafi H."/>
            <person name="Araujo R."/>
            <person name="Bowman C.L."/>
            <person name="Brooks S.Y."/>
            <person name="Buehler E."/>
            <person name="Chan A."/>
            <person name="Chao Q."/>
            <person name="Chen H."/>
            <person name="Cheuk R.F."/>
            <person name="Chin C.W."/>
            <person name="Chung M.K."/>
            <person name="Conn L."/>
            <person name="Conway A.B."/>
            <person name="Conway A.R."/>
            <person name="Creasy T.H."/>
            <person name="Dewar K."/>
            <person name="Dunn P."/>
            <person name="Etgu P."/>
            <person name="Feldblyum T.V."/>
            <person name="Feng J.-D."/>
            <person name="Fong B."/>
            <person name="Fujii C.Y."/>
            <person name="Gill J.E."/>
            <person name="Goldsmith A.D."/>
            <person name="Haas B."/>
            <person name="Hansen N.F."/>
            <person name="Hughes B."/>
            <person name="Huizar L."/>
            <person name="Hunter J.L."/>
            <person name="Jenkins J."/>
            <person name="Johnson-Hopson C."/>
            <person name="Khan S."/>
            <person name="Khaykin E."/>
            <person name="Kim C.J."/>
            <person name="Koo H.L."/>
            <person name="Kremenetskaia I."/>
            <person name="Kurtz D.B."/>
            <person name="Kwan A."/>
            <person name="Lam B."/>
            <person name="Langin-Hooper S."/>
            <person name="Lee A."/>
            <person name="Lee J.M."/>
            <person name="Lenz C.A."/>
            <person name="Li J.H."/>
            <person name="Li Y.-P."/>
            <person name="Lin X."/>
            <person name="Liu S.X."/>
            <person name="Liu Z.A."/>
            <person name="Luros J.S."/>
            <person name="Maiti R."/>
            <person name="Marziali A."/>
            <person name="Militscher J."/>
            <person name="Miranda M."/>
            <person name="Nguyen M."/>
            <person name="Nierman W.C."/>
            <person name="Osborne B.I."/>
            <person name="Pai G."/>
            <person name="Peterson J."/>
            <person name="Pham P.K."/>
            <person name="Rizzo M."/>
            <person name="Rooney T."/>
            <person name="Rowley D."/>
            <person name="Sakano H."/>
            <person name="Salzberg S.L."/>
            <person name="Schwartz J.R."/>
            <person name="Shinn P."/>
            <person name="Southwick A.M."/>
            <person name="Sun H."/>
            <person name="Tallon L.J."/>
            <person name="Tambunga G."/>
            <person name="Toriumi M.J."/>
            <person name="Town C.D."/>
            <person name="Utterback T."/>
            <person name="Van Aken S."/>
            <person name="Vaysberg M."/>
            <person name="Vysotskaia V.S."/>
            <person name="Walker M."/>
            <person name="Wu D."/>
            <person name="Yu G."/>
            <person name="Fraser C.M."/>
            <person name="Venter J.C."/>
            <person name="Davis R.W."/>
        </authorList>
    </citation>
    <scope>NUCLEOTIDE SEQUENCE [LARGE SCALE GENOMIC DNA]</scope>
    <source>
        <strain>cv. Columbia</strain>
    </source>
</reference>
<reference key="2">
    <citation type="journal article" date="2017" name="Plant J.">
        <title>Araport11: a complete reannotation of the Arabidopsis thaliana reference genome.</title>
        <authorList>
            <person name="Cheng C.Y."/>
            <person name="Krishnakumar V."/>
            <person name="Chan A.P."/>
            <person name="Thibaud-Nissen F."/>
            <person name="Schobel S."/>
            <person name="Town C.D."/>
        </authorList>
    </citation>
    <scope>GENOME REANNOTATION</scope>
    <source>
        <strain>cv. Columbia</strain>
    </source>
</reference>
<reference key="3">
    <citation type="journal article" date="2004" name="Prog. Lipid Res.">
        <title>GDSL family of serine esterases/lipases.</title>
        <authorList>
            <person name="Akoh C.C."/>
            <person name="Lee G.-C."/>
            <person name="Liaw Y.-C."/>
            <person name="Huang T.-H."/>
            <person name="Shaw J.-F."/>
        </authorList>
    </citation>
    <scope>REVIEW</scope>
</reference>
<reference key="4">
    <citation type="journal article" date="2008" name="Pak. J. Biol. Sci.">
        <title>Sequence analysis of GDSL lipase gene family in Arabidopsis thaliana.</title>
        <authorList>
            <person name="Ling H."/>
        </authorList>
    </citation>
    <scope>GENE FAMILY</scope>
</reference>
<proteinExistence type="inferred from homology"/>
<organism>
    <name type="scientific">Arabidopsis thaliana</name>
    <name type="common">Mouse-ear cress</name>
    <dbReference type="NCBI Taxonomy" id="3702"/>
    <lineage>
        <taxon>Eukaryota</taxon>
        <taxon>Viridiplantae</taxon>
        <taxon>Streptophyta</taxon>
        <taxon>Embryophyta</taxon>
        <taxon>Tracheophyta</taxon>
        <taxon>Spermatophyta</taxon>
        <taxon>Magnoliopsida</taxon>
        <taxon>eudicotyledons</taxon>
        <taxon>Gunneridae</taxon>
        <taxon>Pentapetalae</taxon>
        <taxon>rosids</taxon>
        <taxon>malvids</taxon>
        <taxon>Brassicales</taxon>
        <taxon>Brassicaceae</taxon>
        <taxon>Camelineae</taxon>
        <taxon>Arabidopsis</taxon>
    </lineage>
</organism>
<evidence type="ECO:0000250" key="1"/>
<evidence type="ECO:0000255" key="2"/>
<evidence type="ECO:0000305" key="3"/>
<dbReference type="EC" id="3.1.1.-"/>
<dbReference type="EMBL" id="AC082643">
    <property type="protein sequence ID" value="AAG50643.1"/>
    <property type="status" value="ALT_SEQ"/>
    <property type="molecule type" value="Genomic_DNA"/>
</dbReference>
<dbReference type="EMBL" id="CP002684">
    <property type="protein sequence ID" value="AEE33555.1"/>
    <property type="status" value="ALT_SEQ"/>
    <property type="molecule type" value="Genomic_DNA"/>
</dbReference>
<dbReference type="PIR" id="G96618">
    <property type="entry name" value="G96618"/>
</dbReference>
<dbReference type="RefSeq" id="NP_001154437.1">
    <property type="nucleotide sequence ID" value="NM_001160965.1"/>
</dbReference>
<dbReference type="RefSeq" id="NP_001333135.1">
    <property type="nucleotide sequence ID" value="NM_001346206.1"/>
</dbReference>
<dbReference type="SMR" id="Q9C653"/>
<dbReference type="BioGRID" id="27443">
    <property type="interactions" value="8"/>
</dbReference>
<dbReference type="FunCoup" id="Q9C653">
    <property type="interactions" value="96"/>
</dbReference>
<dbReference type="GlyGen" id="Q9C653">
    <property type="glycosylation" value="2 sites"/>
</dbReference>
<dbReference type="PeptideAtlas" id="Q9C653"/>
<dbReference type="GeneID" id="28717378"/>
<dbReference type="KEGG" id="ath:AT1G58525"/>
<dbReference type="Araport" id="AT1G58525"/>
<dbReference type="TAIR" id="AT1G58525"/>
<dbReference type="HOGENOM" id="CLU_015101_0_1_1"/>
<dbReference type="InParanoid" id="Q9C653"/>
<dbReference type="PRO" id="PR:Q9C653"/>
<dbReference type="Proteomes" id="UP000006548">
    <property type="component" value="Chromosome 1"/>
</dbReference>
<dbReference type="GO" id="GO:0005576">
    <property type="term" value="C:extracellular region"/>
    <property type="evidence" value="ECO:0000318"/>
    <property type="project" value="GO_Central"/>
</dbReference>
<dbReference type="GO" id="GO:0016298">
    <property type="term" value="F:lipase activity"/>
    <property type="evidence" value="ECO:0007669"/>
    <property type="project" value="InterPro"/>
</dbReference>
<dbReference type="GO" id="GO:0016042">
    <property type="term" value="P:lipid catabolic process"/>
    <property type="evidence" value="ECO:0007669"/>
    <property type="project" value="UniProtKB-KW"/>
</dbReference>
<dbReference type="CDD" id="cd01837">
    <property type="entry name" value="SGNH_plant_lipase_like"/>
    <property type="match status" value="1"/>
</dbReference>
<dbReference type="FunFam" id="3.40.50.1110:FF:000003">
    <property type="entry name" value="GDSL esterase/lipase APG"/>
    <property type="match status" value="1"/>
</dbReference>
<dbReference type="Gene3D" id="3.40.50.1110">
    <property type="entry name" value="SGNH hydrolase"/>
    <property type="match status" value="1"/>
</dbReference>
<dbReference type="InterPro" id="IPR001087">
    <property type="entry name" value="GDSL"/>
</dbReference>
<dbReference type="InterPro" id="IPR050592">
    <property type="entry name" value="GDSL_lipolytic_enzyme"/>
</dbReference>
<dbReference type="InterPro" id="IPR008265">
    <property type="entry name" value="Lipase_GDSL_AS"/>
</dbReference>
<dbReference type="InterPro" id="IPR036514">
    <property type="entry name" value="SGNH_hydro_sf"/>
</dbReference>
<dbReference type="InterPro" id="IPR035669">
    <property type="entry name" value="SGNH_plant_lipase-like"/>
</dbReference>
<dbReference type="PANTHER" id="PTHR45642:SF65">
    <property type="entry name" value="BNAA02G25900D PROTEIN"/>
    <property type="match status" value="1"/>
</dbReference>
<dbReference type="PANTHER" id="PTHR45642">
    <property type="entry name" value="GDSL ESTERASE/LIPASE EXL3"/>
    <property type="match status" value="1"/>
</dbReference>
<dbReference type="Pfam" id="PF00657">
    <property type="entry name" value="Lipase_GDSL"/>
    <property type="match status" value="1"/>
</dbReference>
<dbReference type="SUPFAM" id="SSF52266">
    <property type="entry name" value="SGNH hydrolase"/>
    <property type="match status" value="1"/>
</dbReference>
<dbReference type="PROSITE" id="PS01098">
    <property type="entry name" value="LIPASE_GDSL_SER"/>
    <property type="match status" value="1"/>
</dbReference>
<gene>
    <name type="ordered locus">At1g58525</name>
    <name type="ORF">F9K23.12</name>
</gene>
<protein>
    <recommendedName>
        <fullName>GDSL esterase/lipase At1g58525</fullName>
        <ecNumber>3.1.1.-</ecNumber>
    </recommendedName>
    <alternativeName>
        <fullName>Extracellular lipase At1g58525</fullName>
    </alternativeName>
</protein>
<comment type="subcellular location">
    <subcellularLocation>
        <location evidence="3">Secreted</location>
    </subcellularLocation>
</comment>
<comment type="alternative products">
    <event type="alternative splicing"/>
    <isoform>
        <id>Q9C653-1</id>
        <name>1</name>
        <sequence type="displayed"/>
    </isoform>
    <text>A number of isoforms are produced. According to EST sequences.</text>
</comment>
<comment type="similarity">
    <text evidence="3">Belongs to the 'GDSL' lipolytic enzyme family.</text>
</comment>
<comment type="sequence caution" evidence="3">
    <conflict type="erroneous gene model prediction">
        <sequence resource="EMBL-CDS" id="AAG50643"/>
    </conflict>
</comment>
<comment type="sequence caution" evidence="3">
    <conflict type="erroneous gene model prediction">
        <sequence resource="EMBL-CDS" id="AEE33555"/>
    </conflict>
</comment>
<name>GDL24_ARATH</name>
<keyword id="KW-0025">Alternative splicing</keyword>
<keyword id="KW-0325">Glycoprotein</keyword>
<keyword id="KW-0378">Hydrolase</keyword>
<keyword id="KW-0442">Lipid degradation</keyword>
<keyword id="KW-0443">Lipid metabolism</keyword>
<keyword id="KW-1185">Reference proteome</keyword>
<keyword id="KW-0964">Secreted</keyword>
<keyword id="KW-0732">Signal</keyword>
<accession>Q9C653</accession>
<accession>F4IBD5</accession>
<feature type="signal peptide" evidence="2">
    <location>
        <begin position="1"/>
        <end position="19"/>
    </location>
</feature>
<feature type="chain" id="PRO_0000367366" description="GDSL esterase/lipase At1g58525">
    <location>
        <begin position="20"/>
        <end position="349"/>
    </location>
</feature>
<feature type="active site" description="Nucleophile" evidence="1">
    <location>
        <position position="37"/>
    </location>
</feature>
<feature type="active site" evidence="1">
    <location>
        <position position="324"/>
    </location>
</feature>
<feature type="active site" evidence="1">
    <location>
        <position position="327"/>
    </location>
</feature>
<feature type="glycosylation site" description="N-linked (GlcNAc...) asparagine" evidence="2">
    <location>
        <position position="25"/>
    </location>
</feature>
<feature type="glycosylation site" description="N-linked (GlcNAc...) asparagine" evidence="2">
    <location>
        <position position="316"/>
    </location>
</feature>